<evidence type="ECO:0000255" key="1">
    <source>
        <dbReference type="HAMAP-Rule" id="MF_01159"/>
    </source>
</evidence>
<evidence type="ECO:0000305" key="2"/>
<sequence>MDKKELFDALDDFSQQLLVTLADVEAIKKNLKSLVEENTALRLENSKLRERLGEVEADAPVKAKHVRESVRRIYRDGFHVCNDFYGQRREQDEECMFCDELLYRE</sequence>
<dbReference type="EMBL" id="AE007317">
    <property type="protein sequence ID" value="AAK99641.1"/>
    <property type="status" value="ALT_INIT"/>
    <property type="molecule type" value="Genomic_DNA"/>
</dbReference>
<dbReference type="PIR" id="E97976">
    <property type="entry name" value="E97976"/>
</dbReference>
<dbReference type="RefSeq" id="NP_358431.1">
    <property type="nucleotide sequence ID" value="NC_003098.1"/>
</dbReference>
<dbReference type="RefSeq" id="WP_000358228.1">
    <property type="nucleotide sequence ID" value="NC_003098.1"/>
</dbReference>
<dbReference type="SMR" id="Q8DQ56"/>
<dbReference type="STRING" id="171101.spr0837"/>
<dbReference type="GeneID" id="93739792"/>
<dbReference type="KEGG" id="spr:spr0837"/>
<dbReference type="PATRIC" id="fig|171101.6.peg.926"/>
<dbReference type="eggNOG" id="COG4467">
    <property type="taxonomic scope" value="Bacteria"/>
</dbReference>
<dbReference type="HOGENOM" id="CLU_157169_0_0_9"/>
<dbReference type="Proteomes" id="UP000000586">
    <property type="component" value="Chromosome"/>
</dbReference>
<dbReference type="GO" id="GO:0009295">
    <property type="term" value="C:nucleoid"/>
    <property type="evidence" value="ECO:0007669"/>
    <property type="project" value="UniProtKB-SubCell"/>
</dbReference>
<dbReference type="GO" id="GO:0006260">
    <property type="term" value="P:DNA replication"/>
    <property type="evidence" value="ECO:0007669"/>
    <property type="project" value="UniProtKB-UniRule"/>
</dbReference>
<dbReference type="HAMAP" id="MF_01159">
    <property type="entry name" value="YabA"/>
    <property type="match status" value="1"/>
</dbReference>
<dbReference type="InterPro" id="IPR010377">
    <property type="entry name" value="YabA"/>
</dbReference>
<dbReference type="NCBIfam" id="NF009640">
    <property type="entry name" value="PRK13169.1-1"/>
    <property type="match status" value="1"/>
</dbReference>
<dbReference type="Pfam" id="PF06156">
    <property type="entry name" value="YabA"/>
    <property type="match status" value="1"/>
</dbReference>
<dbReference type="PIRSF" id="PIRSF021439">
    <property type="entry name" value="DUF972"/>
    <property type="match status" value="1"/>
</dbReference>
<gene>
    <name evidence="1" type="primary">yabA</name>
    <name type="ordered locus">spr0837</name>
</gene>
<protein>
    <recommendedName>
        <fullName evidence="1">Replication initiation control protein YabA</fullName>
    </recommendedName>
</protein>
<reference key="1">
    <citation type="journal article" date="2001" name="J. Bacteriol.">
        <title>Genome of the bacterium Streptococcus pneumoniae strain R6.</title>
        <authorList>
            <person name="Hoskins J."/>
            <person name="Alborn W.E. Jr."/>
            <person name="Arnold J."/>
            <person name="Blaszczak L.C."/>
            <person name="Burgett S."/>
            <person name="DeHoff B.S."/>
            <person name="Estrem S.T."/>
            <person name="Fritz L."/>
            <person name="Fu D.-J."/>
            <person name="Fuller W."/>
            <person name="Geringer C."/>
            <person name="Gilmour R."/>
            <person name="Glass J.S."/>
            <person name="Khoja H."/>
            <person name="Kraft A.R."/>
            <person name="Lagace R.E."/>
            <person name="LeBlanc D.J."/>
            <person name="Lee L.N."/>
            <person name="Lefkowitz E.J."/>
            <person name="Lu J."/>
            <person name="Matsushima P."/>
            <person name="McAhren S.M."/>
            <person name="McHenney M."/>
            <person name="McLeaster K."/>
            <person name="Mundy C.W."/>
            <person name="Nicas T.I."/>
            <person name="Norris F.H."/>
            <person name="O'Gara M."/>
            <person name="Peery R.B."/>
            <person name="Robertson G.T."/>
            <person name="Rockey P."/>
            <person name="Sun P.-M."/>
            <person name="Winkler M.E."/>
            <person name="Yang Y."/>
            <person name="Young-Bellido M."/>
            <person name="Zhao G."/>
            <person name="Zook C.A."/>
            <person name="Baltz R.H."/>
            <person name="Jaskunas S.R."/>
            <person name="Rosteck P.R. Jr."/>
            <person name="Skatrud P.L."/>
            <person name="Glass J.I."/>
        </authorList>
    </citation>
    <scope>NUCLEOTIDE SEQUENCE [LARGE SCALE GENOMIC DNA]</scope>
    <source>
        <strain>ATCC BAA-255 / R6</strain>
    </source>
</reference>
<keyword id="KW-0963">Cytoplasm</keyword>
<keyword id="KW-0235">DNA replication</keyword>
<keyword id="KW-0236">DNA replication inhibitor</keyword>
<keyword id="KW-0479">Metal-binding</keyword>
<keyword id="KW-1185">Reference proteome</keyword>
<keyword id="KW-0862">Zinc</keyword>
<accession>Q8DQ56</accession>
<proteinExistence type="inferred from homology"/>
<name>YABA_STRR6</name>
<comment type="function">
    <text evidence="1">Involved in control of chromosome replication initiation. Inhibits the cooperative binding of DnaA to the oriC region, thus negatively regulating initiation of chromosome replication. Inhibits the ability of DnaA-ATP to form a helix on DNA; does not disassemble preformed DnaA-DNA helices. Decreases the residence time of DnaA on the chromosome at its binding sites (oriC, replication forks and promoter-binding sites). Tethers DnaA to the replication machinery via the DNA polymerase beta sliding clamp subunit (dnaN). Associates with oriC and other DnaA targets on the chromosome in a DnaA-dependent manner.</text>
</comment>
<comment type="cofactor">
    <cofactor evidence="1">
        <name>Zn(2+)</name>
        <dbReference type="ChEBI" id="CHEBI:29105"/>
    </cofactor>
    <text evidence="1">Binds 1 zinc ion per subunit.</text>
</comment>
<comment type="subunit">
    <text evidence="1">Homotetramer. Interacts with both DnaA and DnaN, acting as a bridge between these two proteins.</text>
</comment>
<comment type="subcellular location">
    <subcellularLocation>
        <location evidence="1">Cytoplasm</location>
        <location evidence="1">Nucleoid</location>
    </subcellularLocation>
    <text evidence="1">Localizes in tight foci, which correspond to the replisome at mid-cell throughout the cell cycle.</text>
</comment>
<comment type="similarity">
    <text evidence="1">Belongs to the YabA family.</text>
</comment>
<comment type="sequence caution" evidence="2">
    <conflict type="erroneous initiation">
        <sequence resource="EMBL-CDS" id="AAK99641"/>
    </conflict>
</comment>
<organism>
    <name type="scientific">Streptococcus pneumoniae (strain ATCC BAA-255 / R6)</name>
    <dbReference type="NCBI Taxonomy" id="171101"/>
    <lineage>
        <taxon>Bacteria</taxon>
        <taxon>Bacillati</taxon>
        <taxon>Bacillota</taxon>
        <taxon>Bacilli</taxon>
        <taxon>Lactobacillales</taxon>
        <taxon>Streptococcaceae</taxon>
        <taxon>Streptococcus</taxon>
    </lineage>
</organism>
<feature type="chain" id="PRO_0000211928" description="Replication initiation control protein YabA">
    <location>
        <begin position="1"/>
        <end position="105"/>
    </location>
</feature>
<feature type="binding site" evidence="1">
    <location>
        <position position="79"/>
    </location>
    <ligand>
        <name>Zn(2+)</name>
        <dbReference type="ChEBI" id="CHEBI:29105"/>
    </ligand>
</feature>
<feature type="binding site" evidence="1">
    <location>
        <position position="81"/>
    </location>
    <ligand>
        <name>Zn(2+)</name>
        <dbReference type="ChEBI" id="CHEBI:29105"/>
    </ligand>
</feature>
<feature type="binding site" evidence="1">
    <location>
        <position position="95"/>
    </location>
    <ligand>
        <name>Zn(2+)</name>
        <dbReference type="ChEBI" id="CHEBI:29105"/>
    </ligand>
</feature>
<feature type="binding site" evidence="1">
    <location>
        <position position="98"/>
    </location>
    <ligand>
        <name>Zn(2+)</name>
        <dbReference type="ChEBI" id="CHEBI:29105"/>
    </ligand>
</feature>